<protein>
    <recommendedName>
        <fullName>Collagen alpha-1(VIII) chain</fullName>
    </recommendedName>
    <alternativeName>
        <fullName>Endothelial collagen</fullName>
    </alternativeName>
    <component>
        <recommendedName>
            <fullName>Vastatin</fullName>
        </recommendedName>
    </component>
</protein>
<keyword id="KW-0037">Angiogenesis</keyword>
<keyword id="KW-0084">Basement membrane</keyword>
<keyword id="KW-0130">Cell adhesion</keyword>
<keyword id="KW-0176">Collagen</keyword>
<keyword id="KW-0272">Extracellular matrix</keyword>
<keyword id="KW-0379">Hydroxylation</keyword>
<keyword id="KW-1267">Proteomics identification</keyword>
<keyword id="KW-1185">Reference proteome</keyword>
<keyword id="KW-0677">Repeat</keyword>
<keyword id="KW-0964">Secreted</keyword>
<keyword id="KW-0732">Signal</keyword>
<evidence type="ECO:0000255" key="1"/>
<evidence type="ECO:0000255" key="2">
    <source>
        <dbReference type="PROSITE-ProRule" id="PRU00368"/>
    </source>
</evidence>
<evidence type="ECO:0000256" key="3">
    <source>
        <dbReference type="SAM" id="MobiDB-lite"/>
    </source>
</evidence>
<evidence type="ECO:0000269" key="4">
    <source>
    </source>
</evidence>
<evidence type="ECO:0000269" key="5">
    <source>
    </source>
</evidence>
<evidence type="ECO:0000269" key="6">
    <source>
    </source>
</evidence>
<evidence type="ECO:0000269" key="7">
    <source>
    </source>
</evidence>
<evidence type="ECO:0000269" key="8">
    <source>
    </source>
</evidence>
<evidence type="ECO:0000269" key="9">
    <source>
    </source>
</evidence>
<evidence type="ECO:0000269" key="10">
    <source>
    </source>
</evidence>
<evidence type="ECO:0000305" key="11"/>
<name>CO8A1_HUMAN</name>
<reference key="1">
    <citation type="journal article" date="1991" name="Eur. J. Biochem.">
        <title>The complete primary structure of the human alpha 1 (VIII) chain and assignment of its gene (COL8A1) to chromosome 3.</title>
        <authorList>
            <person name="Muragaki Y."/>
            <person name="Mattei M.-G."/>
            <person name="Yamaguchi N."/>
            <person name="Olsen B.R."/>
            <person name="Ninomiya Y."/>
        </authorList>
    </citation>
    <scope>NUCLEOTIDE SEQUENCE [MRNA]</scope>
</reference>
<reference key="2">
    <citation type="submission" date="2003-08" db="EMBL/GenBank/DDBJ databases">
        <title>Cloning of human full-length CDSs in BD Creator(TM) system donor vector.</title>
        <authorList>
            <person name="Kalnine N."/>
            <person name="Chen X."/>
            <person name="Rolfs A."/>
            <person name="Halleck A."/>
            <person name="Hines L."/>
            <person name="Eisenstein S."/>
            <person name="Koundinya M."/>
            <person name="Raphael J."/>
            <person name="Moreira D."/>
            <person name="Kelley T."/>
            <person name="LaBaer J."/>
            <person name="Lin Y."/>
            <person name="Phelan M."/>
            <person name="Farmer A."/>
        </authorList>
    </citation>
    <scope>NUCLEOTIDE SEQUENCE [LARGE SCALE MRNA]</scope>
</reference>
<reference key="3">
    <citation type="submission" date="2005-09" db="EMBL/GenBank/DDBJ databases">
        <authorList>
            <person name="Mural R.J."/>
            <person name="Istrail S."/>
            <person name="Sutton G.G."/>
            <person name="Florea L."/>
            <person name="Halpern A.L."/>
            <person name="Mobarry C.M."/>
            <person name="Lippert R."/>
            <person name="Walenz B."/>
            <person name="Shatkay H."/>
            <person name="Dew I."/>
            <person name="Miller J.R."/>
            <person name="Flanigan M.J."/>
            <person name="Edwards N.J."/>
            <person name="Bolanos R."/>
            <person name="Fasulo D."/>
            <person name="Halldorsson B.V."/>
            <person name="Hannenhalli S."/>
            <person name="Turner R."/>
            <person name="Yooseph S."/>
            <person name="Lu F."/>
            <person name="Nusskern D.R."/>
            <person name="Shue B.C."/>
            <person name="Zheng X.H."/>
            <person name="Zhong F."/>
            <person name="Delcher A.L."/>
            <person name="Huson D.H."/>
            <person name="Kravitz S.A."/>
            <person name="Mouchard L."/>
            <person name="Reinert K."/>
            <person name="Remington K.A."/>
            <person name="Clark A.G."/>
            <person name="Waterman M.S."/>
            <person name="Eichler E.E."/>
            <person name="Adams M.D."/>
            <person name="Hunkapiller M.W."/>
            <person name="Myers E.W."/>
            <person name="Venter J.C."/>
        </authorList>
    </citation>
    <scope>NUCLEOTIDE SEQUENCE [LARGE SCALE GENOMIC DNA]</scope>
</reference>
<reference key="4">
    <citation type="journal article" date="2004" name="Genome Res.">
        <title>The status, quality, and expansion of the NIH full-length cDNA project: the Mammalian Gene Collection (MGC).</title>
        <authorList>
            <consortium name="The MGC Project Team"/>
        </authorList>
    </citation>
    <scope>NUCLEOTIDE SEQUENCE [LARGE SCALE MRNA]</scope>
    <source>
        <tissue>Lung</tissue>
    </source>
</reference>
<reference key="5">
    <citation type="journal article" date="1990" name="Connect. Tissue Res.">
        <title>Distribution of type VIII collagen in tissues: an immunohistochemical study.</title>
        <authorList>
            <person name="Kittelberger R."/>
            <person name="Davis P.F."/>
            <person name="Flynn D.W."/>
            <person name="Greenhill N.S."/>
        </authorList>
    </citation>
    <scope>TISSUE SPECIFICITY</scope>
</reference>
<reference key="6">
    <citation type="journal article" date="1992" name="Biochim. Biophys. Acta">
        <title>Cleavage of type VIII collagen by human neutrophil elastase.</title>
        <authorList>
            <person name="Kittelberger R."/>
            <person name="Neale T.J."/>
            <person name="Francky K.T."/>
            <person name="Greenhill N.S."/>
            <person name="Gibson G.J."/>
        </authorList>
    </citation>
    <scope>PROTEOLYTIC PROCESSING</scope>
</reference>
<reference key="7">
    <citation type="journal article" date="1994" name="Int. J. Exp. Pathol.">
        <title>Human mast cells produce type VIII collagen in vivo.</title>
        <authorList>
            <person name="Ruger B."/>
            <person name="Dunbar P.R."/>
            <person name="Hasan Q."/>
            <person name="Sawada H."/>
            <person name="Kittelberger R."/>
            <person name="Greenhill N."/>
            <person name="Neale T.J."/>
        </authorList>
    </citation>
    <scope>TISSUE SPECIFICITY</scope>
    <scope>POSSIBLE FUNCTION</scope>
</reference>
<reference key="8">
    <citation type="journal article" date="2000" name="Matrix Biol.">
        <title>The alpha1(VIII) and alpha2(VIII) collagen chains form two distinct homotrimeric proteins in vivo.</title>
        <authorList>
            <person name="Greenhill N.S."/>
            <person name="Ruger B.M."/>
            <person name="Hasan Q."/>
            <person name="Davis P.F."/>
        </authorList>
    </citation>
    <scope>TISSUE SPECIFICITY</scope>
</reference>
<reference key="9">
    <citation type="journal article" date="2001" name="Biochem. Biophys. Res. Commun.">
        <title>NC1 domain of human type VIII collagen (alpha 1) inhibits bovine aortic endothelial cell proliferation and causes cell apoptosis.</title>
        <authorList>
            <person name="Xu R."/>
            <person name="Yao Z.-Y."/>
            <person name="Xin L."/>
            <person name="Zhang Q."/>
            <person name="Li T.-P."/>
            <person name="Gan R.-B."/>
        </authorList>
    </citation>
    <scope>FUNCTION OF VASTATIN</scope>
</reference>
<reference key="10">
    <citation type="journal article" date="2004" name="J. Biol. Chem.">
        <title>Expression and supramolecular assembly of recombinant alpha1(viii) and alpha2(viii) collagen homotrimers.</title>
        <authorList>
            <person name="Stephan S."/>
            <person name="Sherratt M.J."/>
            <person name="Hodson N."/>
            <person name="Shuttleworth C.A."/>
            <person name="Kielty C.M."/>
        </authorList>
    </citation>
    <scope>SUBUNIT</scope>
</reference>
<reference key="11">
    <citation type="journal article" date="2007" name="Eur. J. Clin. Invest.">
        <title>Collagen type VIII expression in human diabetic nephropathy.</title>
        <authorList>
            <person name="Gerth J."/>
            <person name="Cohen C.D."/>
            <person name="Hopfer U."/>
            <person name="Lindenmeyer M.T."/>
            <person name="Sommer M."/>
            <person name="Grone H.J."/>
            <person name="Wolf G."/>
        </authorList>
    </citation>
    <scope>INDUCTION</scope>
</reference>
<organism>
    <name type="scientific">Homo sapiens</name>
    <name type="common">Human</name>
    <dbReference type="NCBI Taxonomy" id="9606"/>
    <lineage>
        <taxon>Eukaryota</taxon>
        <taxon>Metazoa</taxon>
        <taxon>Chordata</taxon>
        <taxon>Craniata</taxon>
        <taxon>Vertebrata</taxon>
        <taxon>Euteleostomi</taxon>
        <taxon>Mammalia</taxon>
        <taxon>Eutheria</taxon>
        <taxon>Euarchontoglires</taxon>
        <taxon>Primates</taxon>
        <taxon>Haplorrhini</taxon>
        <taxon>Catarrhini</taxon>
        <taxon>Hominidae</taxon>
        <taxon>Homo</taxon>
    </lineage>
</organism>
<gene>
    <name type="primary">COL8A1</name>
    <name type="synonym">C3orf7</name>
</gene>
<accession>P27658</accession>
<accession>D3DN42</accession>
<accession>Q53XI6</accession>
<accession>Q96D07</accession>
<feature type="signal peptide" evidence="1">
    <location>
        <begin position="1"/>
        <end position="27"/>
    </location>
</feature>
<feature type="chain" id="PRO_0000005762" description="Collagen alpha-1(VIII) chain">
    <location>
        <begin position="28"/>
        <end position="744"/>
    </location>
</feature>
<feature type="chain" id="PRO_0000390484" description="Vastatin">
    <location>
        <begin position="572"/>
        <end position="744"/>
    </location>
</feature>
<feature type="domain" description="C1q" evidence="2">
    <location>
        <begin position="611"/>
        <end position="744"/>
    </location>
</feature>
<feature type="region of interest" description="Nonhelical region (NC2)">
    <location>
        <begin position="29"/>
        <end position="117"/>
    </location>
</feature>
<feature type="region of interest" description="Disordered" evidence="3">
    <location>
        <begin position="115"/>
        <end position="393"/>
    </location>
</feature>
<feature type="region of interest" description="Triple-helical region (COL1)">
    <location>
        <begin position="118"/>
        <end position="571"/>
    </location>
</feature>
<feature type="region of interest" description="Disordered" evidence="3">
    <location>
        <begin position="459"/>
        <end position="589"/>
    </location>
</feature>
<feature type="region of interest" description="Nonhelical region (NC1)">
    <location>
        <begin position="572"/>
        <end position="744"/>
    </location>
</feature>
<feature type="compositionally biased region" description="Pro residues" evidence="3">
    <location>
        <begin position="128"/>
        <end position="137"/>
    </location>
</feature>
<feature type="compositionally biased region" description="Low complexity" evidence="3">
    <location>
        <begin position="168"/>
        <end position="178"/>
    </location>
</feature>
<feature type="compositionally biased region" description="Gly residues" evidence="3">
    <location>
        <begin position="203"/>
        <end position="217"/>
    </location>
</feature>
<feature type="compositionally biased region" description="Gly residues" evidence="3">
    <location>
        <begin position="328"/>
        <end position="337"/>
    </location>
</feature>
<feature type="compositionally biased region" description="Low complexity" evidence="3">
    <location>
        <begin position="466"/>
        <end position="496"/>
    </location>
</feature>
<feature type="compositionally biased region" description="Low complexity" evidence="3">
    <location>
        <begin position="538"/>
        <end position="556"/>
    </location>
</feature>
<feature type="compositionally biased region" description="Pro residues" evidence="3">
    <location>
        <begin position="558"/>
        <end position="581"/>
    </location>
</feature>
<feature type="sequence conflict" description="In Ref. 1; CAA40748." evidence="11" ref="1">
    <original>P</original>
    <variation>L</variation>
    <location>
        <position position="262"/>
    </location>
</feature>
<feature type="sequence conflict" description="In Ref. 1; CAA40748." evidence="11" ref="1">
    <original>P</original>
    <variation>R</variation>
    <location>
        <position position="297"/>
    </location>
</feature>
<feature type="sequence conflict" description="In Ref. 1; CAA40748." evidence="11" ref="1">
    <original>P</original>
    <variation>A</variation>
    <location>
        <position position="344"/>
    </location>
</feature>
<feature type="sequence conflict" description="In Ref. 1; CAA40748." evidence="11" ref="1">
    <original>A</original>
    <variation>S</variation>
    <location>
        <position position="382"/>
    </location>
</feature>
<feature type="sequence conflict" description="In Ref. 1; CAA40748." evidence="11" ref="1">
    <original>P</original>
    <variation>S</variation>
    <location>
        <position position="388"/>
    </location>
</feature>
<feature type="sequence conflict" description="In Ref. 1; CAA40748." evidence="11" ref="1">
    <original>L</original>
    <variation>F</variation>
    <location>
        <position position="454"/>
    </location>
</feature>
<feature type="sequence conflict" description="In Ref. 1; CAA40748." evidence="11" ref="1">
    <original>A</original>
    <variation>H</variation>
    <location>
        <position position="464"/>
    </location>
</feature>
<feature type="sequence conflict" description="In Ref. 1; CAA40748." evidence="11" ref="1">
    <original>Y</original>
    <variation>T</variation>
    <location>
        <position position="601"/>
    </location>
</feature>
<feature type="sequence conflict" description="In Ref. 1; CAA40748." evidence="11" ref="1">
    <original>A</original>
    <variation>G</variation>
    <location>
        <position position="631"/>
    </location>
</feature>
<comment type="function">
    <text evidence="5">Macromolecular component of the subendothelium. Major component of the Descemet's membrane (basement membrane) of corneal endothelial cells. Also a component of the endothelia of blood vessels. Necessary for migration and proliferation of vascular smooth muscle cells and thus, has a potential role in the maintenance of vessel wall integrity and structure, in particular in atherogenesis.</text>
</comment>
<comment type="function">
    <text evidence="5">Vastatin, the C-terminal fragment comprising the NC1 domain, inhibits aortic endothelial cell proliferation and causes cell apoptosis.</text>
</comment>
<comment type="subunit">
    <text evidence="6">Homotrimers, or heterotrimers in association with alpha 2(VIII) type collagens. Four homotrimers can form a tetrahedron stabilized by central interacting C-terminal NC1 trimers.</text>
</comment>
<comment type="interaction">
    <interactant intactId="EBI-747133">
        <id>P27658</id>
    </interactant>
    <interactant intactId="EBI-11976299">
        <id>Q5BKX5-3</id>
        <label>ACTMAP</label>
    </interactant>
    <organismsDiffer>false</organismsDiffer>
    <experiments>3</experiments>
</comment>
<comment type="interaction">
    <interactant intactId="EBI-747133">
        <id>P27658</id>
    </interactant>
    <interactant intactId="EBI-6425121">
        <id>Q96C12</id>
        <label>ARMC5</label>
    </interactant>
    <organismsDiffer>false</organismsDiffer>
    <experiments>3</experiments>
</comment>
<comment type="interaction">
    <interactant intactId="EBI-747133">
        <id>P27658</id>
    </interactant>
    <interactant intactId="EBI-953896">
        <id>Q9NP55</id>
        <label>BPIFA1</label>
    </interactant>
    <organismsDiffer>false</organismsDiffer>
    <experiments>3</experiments>
</comment>
<comment type="interaction">
    <interactant intactId="EBI-747133">
        <id>P27658</id>
    </interactant>
    <interactant intactId="EBI-7317823">
        <id>Q6P5X5</id>
        <label>C22orf39</label>
    </interactant>
    <organismsDiffer>false</organismsDiffer>
    <experiments>3</experiments>
</comment>
<comment type="interaction">
    <interactant intactId="EBI-747133">
        <id>P27658</id>
    </interactant>
    <interactant intactId="EBI-3904822">
        <id>P48745</id>
        <label>CCN3</label>
    </interactant>
    <organismsDiffer>false</organismsDiffer>
    <experiments>3</experiments>
</comment>
<comment type="interaction">
    <interactant intactId="EBI-747133">
        <id>P27658</id>
    </interactant>
    <interactant intactId="EBI-747776">
        <id>Q53EZ4</id>
        <label>CEP55</label>
    </interactant>
    <organismsDiffer>false</organismsDiffer>
    <experiments>3</experiments>
</comment>
<comment type="interaction">
    <interactant intactId="EBI-747133">
        <id>P27658</id>
    </interactant>
    <interactant intactId="EBI-718615">
        <id>Q9H5F2</id>
        <label>CFAP68</label>
    </interactant>
    <organismsDiffer>false</organismsDiffer>
    <experiments>3</experiments>
</comment>
<comment type="interaction">
    <interactant intactId="EBI-747133">
        <id>P27658</id>
    </interactant>
    <interactant intactId="EBI-7062247">
        <id>Q9UHD4</id>
        <label>CIDEB</label>
    </interactant>
    <organismsDiffer>false</organismsDiffer>
    <experiments>3</experiments>
</comment>
<comment type="interaction">
    <interactant intactId="EBI-747133">
        <id>P27658</id>
    </interactant>
    <interactant intactId="EBI-10192698">
        <id>Q02930-3</id>
        <label>CREB5</label>
    </interactant>
    <organismsDiffer>false</organismsDiffer>
    <experiments>6</experiments>
</comment>
<comment type="interaction">
    <interactant intactId="EBI-747133">
        <id>P27658</id>
    </interactant>
    <interactant intactId="EBI-3867333">
        <id>A8MQ03</id>
        <label>CYSRT1</label>
    </interactant>
    <organismsDiffer>false</organismsDiffer>
    <experiments>6</experiments>
</comment>
<comment type="interaction">
    <interactant intactId="EBI-747133">
        <id>P27658</id>
    </interactant>
    <interactant intactId="EBI-18398199">
        <id>A0A0U1RQF7</id>
        <label>DPEP2NB</label>
    </interactant>
    <organismsDiffer>false</organismsDiffer>
    <experiments>3</experiments>
</comment>
<comment type="interaction">
    <interactant intactId="EBI-747133">
        <id>P27658</id>
    </interactant>
    <interactant intactId="EBI-12845222">
        <id>Q9NVL1-2</id>
        <label>FAM86C1P</label>
    </interactant>
    <organismsDiffer>false</organismsDiffer>
    <experiments>5</experiments>
</comment>
<comment type="interaction">
    <interactant intactId="EBI-747133">
        <id>P27658</id>
    </interactant>
    <interactant intactId="EBI-947973">
        <id>P98095</id>
        <label>FBLN2</label>
    </interactant>
    <organismsDiffer>false</organismsDiffer>
    <experiments>3</experiments>
</comment>
<comment type="interaction">
    <interactant intactId="EBI-747133">
        <id>P27658</id>
    </interactant>
    <interactant intactId="EBI-719816">
        <id>Q9NWN3</id>
        <label>FBXO34</label>
    </interactant>
    <organismsDiffer>false</organismsDiffer>
    <experiments>3</experiments>
</comment>
<comment type="interaction">
    <interactant intactId="EBI-747133">
        <id>P27658</id>
    </interactant>
    <interactant intactId="EBI-725515">
        <id>O43559</id>
        <label>FRS3</label>
    </interactant>
    <organismsDiffer>false</organismsDiffer>
    <experiments>3</experiments>
</comment>
<comment type="interaction">
    <interactant intactId="EBI-747133">
        <id>P27658</id>
    </interactant>
    <interactant intactId="EBI-374781">
        <id>O76003</id>
        <label>GLRX3</label>
    </interactant>
    <organismsDiffer>false</organismsDiffer>
    <experiments>3</experiments>
</comment>
<comment type="interaction">
    <interactant intactId="EBI-747133">
        <id>P27658</id>
    </interactant>
    <interactant intactId="EBI-19954058">
        <id>O15499</id>
        <label>GSC2</label>
    </interactant>
    <organismsDiffer>false</organismsDiffer>
    <experiments>3</experiments>
</comment>
<comment type="interaction">
    <interactant intactId="EBI-747133">
        <id>P27658</id>
    </interactant>
    <interactant intactId="EBI-740785">
        <id>P49639</id>
        <label>HOXA1</label>
    </interactant>
    <organismsDiffer>false</organismsDiffer>
    <experiments>6</experiments>
</comment>
<comment type="interaction">
    <interactant intactId="EBI-747133">
        <id>P27658</id>
    </interactant>
    <interactant intactId="EBI-6509505">
        <id>Q0VD86</id>
        <label>INCA1</label>
    </interactant>
    <organismsDiffer>false</organismsDiffer>
    <experiments>9</experiments>
</comment>
<comment type="interaction">
    <interactant intactId="EBI-747133">
        <id>P27658</id>
    </interactant>
    <interactant intactId="EBI-10693436">
        <id>Q9BS75</id>
        <label>KLHL20</label>
    </interactant>
    <organismsDiffer>false</organismsDiffer>
    <experiments>3</experiments>
</comment>
<comment type="interaction">
    <interactant intactId="EBI-747133">
        <id>P27658</id>
    </interactant>
    <interactant intactId="EBI-10981970">
        <id>Q5T749</id>
        <label>KPRP</label>
    </interactant>
    <organismsDiffer>false</organismsDiffer>
    <experiments>3</experiments>
</comment>
<comment type="interaction">
    <interactant intactId="EBI-747133">
        <id>P27658</id>
    </interactant>
    <interactant intactId="EBI-1045716">
        <id>O76014</id>
        <label>KRT37</label>
    </interactant>
    <organismsDiffer>false</organismsDiffer>
    <experiments>3</experiments>
</comment>
<comment type="interaction">
    <interactant intactId="EBI-747133">
        <id>P27658</id>
    </interactant>
    <interactant intactId="EBI-10171697">
        <id>Q6A162</id>
        <label>KRT40</label>
    </interactant>
    <organismsDiffer>false</organismsDiffer>
    <experiments>3</experiments>
</comment>
<comment type="interaction">
    <interactant intactId="EBI-747133">
        <id>P27658</id>
    </interactant>
    <interactant intactId="EBI-1045341">
        <id>Q9NSB4</id>
        <label>KRT82</label>
    </interactant>
    <organismsDiffer>false</organismsDiffer>
    <experiments>3</experiments>
</comment>
<comment type="interaction">
    <interactant intactId="EBI-747133">
        <id>P27658</id>
    </interactant>
    <interactant intactId="EBI-11749135">
        <id>Q8IUG1</id>
        <label>KRTAP1-3</label>
    </interactant>
    <organismsDiffer>false</organismsDiffer>
    <experiments>3</experiments>
</comment>
<comment type="interaction">
    <interactant intactId="EBI-747133">
        <id>P27658</id>
    </interactant>
    <interactant intactId="EBI-10172290">
        <id>P60409</id>
        <label>KRTAP10-7</label>
    </interactant>
    <organismsDiffer>false</organismsDiffer>
    <experiments>3</experiments>
</comment>
<comment type="interaction">
    <interactant intactId="EBI-747133">
        <id>P27658</id>
    </interactant>
    <interactant intactId="EBI-10171774">
        <id>P60410</id>
        <label>KRTAP10-8</label>
    </interactant>
    <organismsDiffer>false</organismsDiffer>
    <experiments>8</experiments>
</comment>
<comment type="interaction">
    <interactant intactId="EBI-747133">
        <id>P27658</id>
    </interactant>
    <interactant intactId="EBI-11953334">
        <id>P60328</id>
        <label>KRTAP12-3</label>
    </interactant>
    <organismsDiffer>false</organismsDiffer>
    <experiments>3</experiments>
</comment>
<comment type="interaction">
    <interactant intactId="EBI-747133">
        <id>P27658</id>
    </interactant>
    <interactant intactId="EBI-10241252">
        <id>Q3SY46</id>
        <label>KRTAP13-3</label>
    </interactant>
    <organismsDiffer>false</organismsDiffer>
    <experiments>3</experiments>
</comment>
<comment type="interaction">
    <interactant intactId="EBI-747133">
        <id>P27658</id>
    </interactant>
    <interactant intactId="EBI-12196745">
        <id>Q3LHN2</id>
        <label>KRTAP19-2</label>
    </interactant>
    <organismsDiffer>false</organismsDiffer>
    <experiments>3</experiments>
</comment>
<comment type="interaction">
    <interactant intactId="EBI-747133">
        <id>P27658</id>
    </interactant>
    <interactant intactId="EBI-1048945">
        <id>Q3LI72</id>
        <label>KRTAP19-5</label>
    </interactant>
    <organismsDiffer>false</organismsDiffer>
    <experiments>3</experiments>
</comment>
<comment type="interaction">
    <interactant intactId="EBI-747133">
        <id>P27658</id>
    </interactant>
    <interactant intactId="EBI-10241353">
        <id>Q3SYF9</id>
        <label>KRTAP19-7</label>
    </interactant>
    <organismsDiffer>false</organismsDiffer>
    <experiments>3</experiments>
</comment>
<comment type="interaction">
    <interactant intactId="EBI-747133">
        <id>P27658</id>
    </interactant>
    <interactant intactId="EBI-3957672">
        <id>Q6PEX3</id>
        <label>KRTAP26-1</label>
    </interactant>
    <organismsDiffer>false</organismsDiffer>
    <experiments>4</experiments>
</comment>
<comment type="interaction">
    <interactant intactId="EBI-747133">
        <id>P27658</id>
    </interactant>
    <interactant intactId="EBI-751260">
        <id>Q9BYR7</id>
        <label>KRTAP3-2</label>
    </interactant>
    <organismsDiffer>false</organismsDiffer>
    <experiments>3</experiments>
</comment>
<comment type="interaction">
    <interactant intactId="EBI-747133">
        <id>P27658</id>
    </interactant>
    <interactant intactId="EBI-10250562">
        <id>Q6L8G9</id>
        <label>KRTAP5-6</label>
    </interactant>
    <organismsDiffer>false</organismsDiffer>
    <experiments>3</experiments>
</comment>
<comment type="interaction">
    <interactant intactId="EBI-747133">
        <id>P27658</id>
    </interactant>
    <interactant intactId="EBI-11987425">
        <id>Q6L8G8</id>
        <label>KRTAP5-7</label>
    </interactant>
    <organismsDiffer>false</organismsDiffer>
    <experiments>3</experiments>
</comment>
<comment type="interaction">
    <interactant intactId="EBI-747133">
        <id>P27658</id>
    </interactant>
    <interactant intactId="EBI-3958099">
        <id>P26371</id>
        <label>KRTAP5-9</label>
    </interactant>
    <organismsDiffer>false</organismsDiffer>
    <experiments>3</experiments>
</comment>
<comment type="interaction">
    <interactant intactId="EBI-747133">
        <id>P27658</id>
    </interactant>
    <interactant intactId="EBI-11962084">
        <id>Q3LI66</id>
        <label>KRTAP6-2</label>
    </interactant>
    <organismsDiffer>false</organismsDiffer>
    <experiments>5</experiments>
</comment>
<comment type="interaction">
    <interactant intactId="EBI-747133">
        <id>P27658</id>
    </interactant>
    <interactant intactId="EBI-22311199">
        <id>Q3LI67</id>
        <label>KRTAP6-3</label>
    </interactant>
    <organismsDiffer>false</organismsDiffer>
    <experiments>3</experiments>
</comment>
<comment type="interaction">
    <interactant intactId="EBI-747133">
        <id>P27658</id>
    </interactant>
    <interactant intactId="EBI-1044640">
        <id>Q9BYQ4</id>
        <label>KRTAP9-2</label>
    </interactant>
    <organismsDiffer>false</organismsDiffer>
    <experiments>3</experiments>
</comment>
<comment type="interaction">
    <interactant intactId="EBI-747133">
        <id>P27658</id>
    </interactant>
    <interactant intactId="EBI-1043191">
        <id>Q9BYQ3</id>
        <label>KRTAP9-3</label>
    </interactant>
    <organismsDiffer>false</organismsDiffer>
    <experiments>3</experiments>
</comment>
<comment type="interaction">
    <interactant intactId="EBI-747133">
        <id>P27658</id>
    </interactant>
    <interactant intactId="EBI-12864460">
        <id>P48059-3</id>
        <label>LIMS1</label>
    </interactant>
    <organismsDiffer>false</organismsDiffer>
    <experiments>3</experiments>
</comment>
<comment type="interaction">
    <interactant intactId="EBI-747133">
        <id>P27658</id>
    </interactant>
    <interactant intactId="EBI-18015780">
        <id>Q3KP22-3</id>
        <label>MAJIN</label>
    </interactant>
    <organismsDiffer>false</organismsDiffer>
    <experiments>3</experiments>
</comment>
<comment type="interaction">
    <interactant intactId="EBI-747133">
        <id>P27658</id>
    </interactant>
    <interactant intactId="EBI-748610">
        <id>Q6IA69</id>
        <label>NADSYN1</label>
    </interactant>
    <organismsDiffer>false</organismsDiffer>
    <experiments>3</experiments>
</comment>
<comment type="interaction">
    <interactant intactId="EBI-747133">
        <id>P27658</id>
    </interactant>
    <interactant intactId="EBI-945833">
        <id>Q7Z3S9</id>
        <label>NOTCH2NLA</label>
    </interactant>
    <organismsDiffer>false</organismsDiffer>
    <experiments>3</experiments>
</comment>
<comment type="interaction">
    <interactant intactId="EBI-747133">
        <id>P27658</id>
    </interactant>
    <interactant intactId="EBI-22310682">
        <id>P0DPK4</id>
        <label>NOTCH2NLC</label>
    </interactant>
    <organismsDiffer>false</organismsDiffer>
    <experiments>5</experiments>
</comment>
<comment type="interaction">
    <interactant intactId="EBI-747133">
        <id>P27658</id>
    </interactant>
    <interactant intactId="EBI-740446">
        <id>P32242</id>
        <label>OTX1</label>
    </interactant>
    <organismsDiffer>false</organismsDiffer>
    <experiments>3</experiments>
</comment>
<comment type="interaction">
    <interactant intactId="EBI-747133">
        <id>P27658</id>
    </interactant>
    <interactant intactId="EBI-750734">
        <id>Q9NRY6</id>
        <label>PLSCR3</label>
    </interactant>
    <organismsDiffer>false</organismsDiffer>
    <experiments>3</experiments>
</comment>
<comment type="interaction">
    <interactant intactId="EBI-747133">
        <id>P27658</id>
    </interactant>
    <interactant intactId="EBI-11986735">
        <id>Q8WVV4-1</id>
        <label>POF1B</label>
    </interactant>
    <organismsDiffer>false</organismsDiffer>
    <experiments>3</experiments>
</comment>
<comment type="interaction">
    <interactant intactId="EBI-747133">
        <id>P27658</id>
    </interactant>
    <interactant intactId="EBI-17236143">
        <id>Q12837</id>
        <label>POU4F2</label>
    </interactant>
    <organismsDiffer>false</organismsDiffer>
    <experiments>5</experiments>
</comment>
<comment type="interaction">
    <interactant intactId="EBI-747133">
        <id>P27658</id>
    </interactant>
    <interactant intactId="EBI-740343">
        <id>Q93062-3</id>
        <label>RBPMS</label>
    </interactant>
    <organismsDiffer>false</organismsDiffer>
    <experiments>3</experiments>
</comment>
<comment type="interaction">
    <interactant intactId="EBI-747133">
        <id>P27658</id>
    </interactant>
    <interactant intactId="EBI-307352">
        <id>Q04864</id>
        <label>REL</label>
    </interactant>
    <organismsDiffer>false</organismsDiffer>
    <experiments>3</experiments>
</comment>
<comment type="interaction">
    <interactant intactId="EBI-747133">
        <id>P27658</id>
    </interactant>
    <interactant intactId="EBI-10178530">
        <id>O76081-6</id>
        <label>RGS20</label>
    </interactant>
    <organismsDiffer>false</organismsDiffer>
    <experiments>3</experiments>
</comment>
<comment type="interaction">
    <interactant intactId="EBI-747133">
        <id>P27658</id>
    </interactant>
    <interactant intactId="EBI-17589229">
        <id>Q6NTF9-3</id>
        <label>RHBDD2</label>
    </interactant>
    <organismsDiffer>false</organismsDiffer>
    <experiments>3</experiments>
</comment>
<comment type="interaction">
    <interactant intactId="EBI-747133">
        <id>P27658</id>
    </interactant>
    <interactant intactId="EBI-13307533">
        <id>P78381-3</id>
        <label>SLC35A2</label>
    </interactant>
    <organismsDiffer>false</organismsDiffer>
    <experiments>3</experiments>
</comment>
<comment type="interaction">
    <interactant intactId="EBI-747133">
        <id>P27658</id>
    </interactant>
    <interactant intactId="EBI-10198587">
        <id>Q02446</id>
        <label>SP4</label>
    </interactant>
    <organismsDiffer>false</organismsDiffer>
    <experiments>3</experiments>
</comment>
<comment type="interaction">
    <interactant intactId="EBI-747133">
        <id>P27658</id>
    </interactant>
    <interactant intactId="EBI-8635958">
        <id>Q6RVD6</id>
        <label>SPATA8</label>
    </interactant>
    <organismsDiffer>false</organismsDiffer>
    <experiments>3</experiments>
</comment>
<comment type="interaction">
    <interactant intactId="EBI-747133">
        <id>P27658</id>
    </interactant>
    <interactant intactId="EBI-10269322">
        <id>Q8NCR6</id>
        <label>SPMIP6</label>
    </interactant>
    <organismsDiffer>false</organismsDiffer>
    <experiments>3</experiments>
</comment>
<comment type="interaction">
    <interactant intactId="EBI-747133">
        <id>P27658</id>
    </interactant>
    <interactant intactId="EBI-354861">
        <id>Q9C004</id>
        <label>SPRY4</label>
    </interactant>
    <organismsDiffer>false</organismsDiffer>
    <experiments>3</experiments>
</comment>
<comment type="interaction">
    <interactant intactId="EBI-747133">
        <id>P27658</id>
    </interactant>
    <interactant intactId="EBI-17716262">
        <id>Q9UPQ4-2</id>
        <label>TRIM35</label>
    </interactant>
    <organismsDiffer>false</organismsDiffer>
    <experiments>3</experiments>
</comment>
<comment type="interaction">
    <interactant intactId="EBI-747133">
        <id>P27658</id>
    </interactant>
    <interactant intactId="EBI-947187">
        <id>Q9UHD9</id>
        <label>UBQLN2</label>
    </interactant>
    <organismsDiffer>false</organismsDiffer>
    <experiments>3</experiments>
</comment>
<comment type="interaction">
    <interactant intactId="EBI-747133">
        <id>P27658</id>
    </interactant>
    <interactant intactId="EBI-2107455">
        <id>Q08AM6</id>
        <label>VAC14</label>
    </interactant>
    <organismsDiffer>false</organismsDiffer>
    <experiments>7</experiments>
</comment>
<comment type="interaction">
    <interactant intactId="EBI-747133">
        <id>P27658</id>
    </interactant>
    <interactant intactId="EBI-12175871">
        <id>Q8TCV5</id>
        <label>WFDC5</label>
    </interactant>
    <organismsDiffer>false</organismsDiffer>
    <experiments>3</experiments>
</comment>
<comment type="interaction">
    <interactant intactId="EBI-747133">
        <id>P27658</id>
    </interactant>
    <interactant intactId="EBI-10251462">
        <id>Q6NX45</id>
        <label>ZNF774</label>
    </interactant>
    <organismsDiffer>false</organismsDiffer>
    <experiments>3</experiments>
</comment>
<comment type="interaction">
    <interactant intactId="EBI-747133">
        <id>P27658</id>
    </interactant>
    <interactant intactId="EBI-347522">
        <id>O43257</id>
        <label>ZNHIT1</label>
    </interactant>
    <organismsDiffer>false</organismsDiffer>
    <experiments>3</experiments>
</comment>
<comment type="subcellular location">
    <subcellularLocation>
        <location>Secreted</location>
        <location>Extracellular space</location>
        <location>Extracellular matrix</location>
        <location>Basement membrane</location>
    </subcellularLocation>
</comment>
<comment type="tissue specificity">
    <text evidence="4 9 10">Expressed primarily in the subendothelium of large blood vessels. Also expressed in arterioles and venules in muscle, heart, kidney, spleen, umbilical cord, liver and lung and is also found in connective tissue layers around hair follicles, around nerve bundles in muscle, in the dura of the optic nerve, in cornea and sclera, and in the perichondrium of cartilaginous tissues. In the kidney, expressed in mesangial cells, glomerular endothelial cells, and tubular epithelial cells. Also expressed in mast cells, and in astrocytes during the repair process. Expressed in Descemet's membrane. Specifically expressed in peritoneal fibroblasts and mesothelial cells.</text>
</comment>
<comment type="induction">
    <text evidence="8">Up-regulated during vascular injury, in atherosclerosis and in diabetes.</text>
</comment>
<comment type="PTM">
    <text>Prolines at the third position of the tripeptide repeating unit (G-X-Y) are hydroxylated in some or all of the chains.</text>
</comment>
<comment type="PTM">
    <text evidence="7">Proteolytically cleaved by neutrophil elastase, in vitro. Proteolytic processing produces the C-terminal NC1 domain fragment, vastatin.</text>
</comment>
<comment type="miscellaneous">
    <text>Four consecutive Gly-Pro-Pro triplets are present at the C-terminus of the triple-helical region. These may provide the high thermal stability of this region.</text>
</comment>
<proteinExistence type="evidence at protein level"/>
<dbReference type="EMBL" id="X57527">
    <property type="protein sequence ID" value="CAA40748.1"/>
    <property type="molecule type" value="mRNA"/>
</dbReference>
<dbReference type="EMBL" id="BT009917">
    <property type="protein sequence ID" value="AAP88919.1"/>
    <property type="molecule type" value="mRNA"/>
</dbReference>
<dbReference type="EMBL" id="CH471052">
    <property type="protein sequence ID" value="EAW79837.1"/>
    <property type="molecule type" value="Genomic_DNA"/>
</dbReference>
<dbReference type="EMBL" id="CH471052">
    <property type="protein sequence ID" value="EAW79838.1"/>
    <property type="molecule type" value="Genomic_DNA"/>
</dbReference>
<dbReference type="EMBL" id="CH471052">
    <property type="protein sequence ID" value="EAW79840.1"/>
    <property type="molecule type" value="Genomic_DNA"/>
</dbReference>
<dbReference type="EMBL" id="BC013581">
    <property type="protein sequence ID" value="AAH13581.1"/>
    <property type="molecule type" value="mRNA"/>
</dbReference>
<dbReference type="CCDS" id="CCDS2934.1"/>
<dbReference type="PIR" id="S15435">
    <property type="entry name" value="S15435"/>
</dbReference>
<dbReference type="RefSeq" id="NP_001841.2">
    <property type="nucleotide sequence ID" value="NM_001850.4"/>
</dbReference>
<dbReference type="RefSeq" id="NP_065084.2">
    <property type="nucleotide sequence ID" value="NM_020351.3"/>
</dbReference>
<dbReference type="SMR" id="P27658"/>
<dbReference type="BioGRID" id="107692">
    <property type="interactions" value="130"/>
</dbReference>
<dbReference type="ComplexPortal" id="CPX-1745">
    <property type="entry name" value="Collagen type VIII trimer variant 1"/>
</dbReference>
<dbReference type="ComplexPortal" id="CPX-1746">
    <property type="entry name" value="Collagen type VIII trimer variant 2"/>
</dbReference>
<dbReference type="FunCoup" id="P27658">
    <property type="interactions" value="323"/>
</dbReference>
<dbReference type="IntAct" id="P27658">
    <property type="interactions" value="114"/>
</dbReference>
<dbReference type="MINT" id="P27658"/>
<dbReference type="STRING" id="9606.ENSP00000261037"/>
<dbReference type="GlyCosmos" id="P27658">
    <property type="glycosylation" value="1 site, 1 glycan"/>
</dbReference>
<dbReference type="GlyGen" id="P27658">
    <property type="glycosylation" value="1 site, 1 O-linked glycan (1 site)"/>
</dbReference>
<dbReference type="iPTMnet" id="P27658"/>
<dbReference type="PhosphoSitePlus" id="P27658"/>
<dbReference type="BioMuta" id="COL8A1"/>
<dbReference type="DMDM" id="21903375"/>
<dbReference type="jPOST" id="P27658"/>
<dbReference type="MassIVE" id="P27658"/>
<dbReference type="PaxDb" id="9606-ENSP00000261037"/>
<dbReference type="PeptideAtlas" id="P27658"/>
<dbReference type="ProteomicsDB" id="54404"/>
<dbReference type="Pumba" id="P27658"/>
<dbReference type="Antibodypedia" id="32194">
    <property type="antibodies" value="196 antibodies from 28 providers"/>
</dbReference>
<dbReference type="DNASU" id="1295"/>
<dbReference type="Ensembl" id="ENST00000261037.7">
    <property type="protein sequence ID" value="ENSP00000261037.3"/>
    <property type="gene ID" value="ENSG00000144810.16"/>
</dbReference>
<dbReference type="Ensembl" id="ENST00000273342.8">
    <property type="protein sequence ID" value="ENSP00000273342.3"/>
    <property type="gene ID" value="ENSG00000144810.16"/>
</dbReference>
<dbReference type="Ensembl" id="ENST00000652472.1">
    <property type="protein sequence ID" value="ENSP00000498483.1"/>
    <property type="gene ID" value="ENSG00000144810.16"/>
</dbReference>
<dbReference type="GeneID" id="1295"/>
<dbReference type="KEGG" id="hsa:1295"/>
<dbReference type="MANE-Select" id="ENST00000652472.1">
    <property type="protein sequence ID" value="ENSP00000498483.1"/>
    <property type="RefSeq nucleotide sequence ID" value="NM_020351.4"/>
    <property type="RefSeq protein sequence ID" value="NP_065084.2"/>
</dbReference>
<dbReference type="UCSC" id="uc003dtg.3">
    <property type="organism name" value="human"/>
</dbReference>
<dbReference type="AGR" id="HGNC:2215"/>
<dbReference type="CTD" id="1295"/>
<dbReference type="DisGeNET" id="1295"/>
<dbReference type="GeneCards" id="COL8A1"/>
<dbReference type="HGNC" id="HGNC:2215">
    <property type="gene designation" value="COL8A1"/>
</dbReference>
<dbReference type="HPA" id="ENSG00000144810">
    <property type="expression patterns" value="Low tissue specificity"/>
</dbReference>
<dbReference type="MalaCards" id="COL8A1"/>
<dbReference type="MIM" id="120251">
    <property type="type" value="gene"/>
</dbReference>
<dbReference type="neXtProt" id="NX_P27658"/>
<dbReference type="OpenTargets" id="ENSG00000144810"/>
<dbReference type="PharmGKB" id="PA26731"/>
<dbReference type="VEuPathDB" id="HostDB:ENSG00000144810"/>
<dbReference type="eggNOG" id="ENOG502QRFR">
    <property type="taxonomic scope" value="Eukaryota"/>
</dbReference>
<dbReference type="GeneTree" id="ENSGT00940000158272"/>
<dbReference type="HOGENOM" id="CLU_001074_21_0_1"/>
<dbReference type="InParanoid" id="P27658"/>
<dbReference type="OMA" id="PMGKEMP"/>
<dbReference type="OrthoDB" id="6139560at2759"/>
<dbReference type="PAN-GO" id="P27658">
    <property type="GO annotations" value="4 GO annotations based on evolutionary models"/>
</dbReference>
<dbReference type="PhylomeDB" id="P27658"/>
<dbReference type="TreeFam" id="TF334029"/>
<dbReference type="PathwayCommons" id="P27658"/>
<dbReference type="Reactome" id="R-HSA-1442490">
    <property type="pathway name" value="Collagen degradation"/>
</dbReference>
<dbReference type="Reactome" id="R-HSA-1650814">
    <property type="pathway name" value="Collagen biosynthesis and modifying enzymes"/>
</dbReference>
<dbReference type="Reactome" id="R-HSA-2022090">
    <property type="pathway name" value="Assembly of collagen fibrils and other multimeric structures"/>
</dbReference>
<dbReference type="Reactome" id="R-HSA-216083">
    <property type="pathway name" value="Integrin cell surface interactions"/>
</dbReference>
<dbReference type="Reactome" id="R-HSA-8948216">
    <property type="pathway name" value="Collagen chain trimerization"/>
</dbReference>
<dbReference type="SignaLink" id="P27658"/>
<dbReference type="BioGRID-ORCS" id="1295">
    <property type="hits" value="14 hits in 1139 CRISPR screens"/>
</dbReference>
<dbReference type="ChiTaRS" id="COL8A1">
    <property type="organism name" value="human"/>
</dbReference>
<dbReference type="GeneWiki" id="Collagen,_type_VIII,_alpha_1"/>
<dbReference type="GenomeRNAi" id="1295"/>
<dbReference type="Pharos" id="P27658">
    <property type="development level" value="Tbio"/>
</dbReference>
<dbReference type="PRO" id="PR:P27658"/>
<dbReference type="Proteomes" id="UP000005640">
    <property type="component" value="Chromosome 3"/>
</dbReference>
<dbReference type="RNAct" id="P27658">
    <property type="molecule type" value="protein"/>
</dbReference>
<dbReference type="Bgee" id="ENSG00000144810">
    <property type="expression patterns" value="Expressed in visceral pleura and 157 other cell types or tissues"/>
</dbReference>
<dbReference type="ExpressionAtlas" id="P27658">
    <property type="expression patterns" value="baseline and differential"/>
</dbReference>
<dbReference type="GO" id="GO:0005591">
    <property type="term" value="C:collagen type VIII trimer"/>
    <property type="evidence" value="ECO:0000304"/>
    <property type="project" value="GO_Central"/>
</dbReference>
<dbReference type="GO" id="GO:0062023">
    <property type="term" value="C:collagen-containing extracellular matrix"/>
    <property type="evidence" value="ECO:0007005"/>
    <property type="project" value="BHF-UCL"/>
</dbReference>
<dbReference type="GO" id="GO:0005788">
    <property type="term" value="C:endoplasmic reticulum lumen"/>
    <property type="evidence" value="ECO:0000304"/>
    <property type="project" value="Reactome"/>
</dbReference>
<dbReference type="GO" id="GO:0005576">
    <property type="term" value="C:extracellular region"/>
    <property type="evidence" value="ECO:0000304"/>
    <property type="project" value="Reactome"/>
</dbReference>
<dbReference type="GO" id="GO:0005615">
    <property type="term" value="C:extracellular space"/>
    <property type="evidence" value="ECO:0000318"/>
    <property type="project" value="GO_Central"/>
</dbReference>
<dbReference type="GO" id="GO:0030020">
    <property type="term" value="F:extracellular matrix structural constituent conferring tensile strength"/>
    <property type="evidence" value="ECO:0000318"/>
    <property type="project" value="GO_Central"/>
</dbReference>
<dbReference type="GO" id="GO:0001525">
    <property type="term" value="P:angiogenesis"/>
    <property type="evidence" value="ECO:0007669"/>
    <property type="project" value="UniProtKB-KW"/>
</dbReference>
<dbReference type="GO" id="GO:0048593">
    <property type="term" value="P:camera-type eye morphogenesis"/>
    <property type="evidence" value="ECO:0007669"/>
    <property type="project" value="Ensembl"/>
</dbReference>
<dbReference type="GO" id="GO:0007155">
    <property type="term" value="P:cell adhesion"/>
    <property type="evidence" value="ECO:0007669"/>
    <property type="project" value="UniProtKB-KW"/>
</dbReference>
<dbReference type="GO" id="GO:0035987">
    <property type="term" value="P:endodermal cell differentiation"/>
    <property type="evidence" value="ECO:0000270"/>
    <property type="project" value="UniProtKB"/>
</dbReference>
<dbReference type="GO" id="GO:0001935">
    <property type="term" value="P:endothelial cell proliferation"/>
    <property type="evidence" value="ECO:0007669"/>
    <property type="project" value="Ensembl"/>
</dbReference>
<dbReference type="GO" id="GO:0010811">
    <property type="term" value="P:positive regulation of cell-substrate adhesion"/>
    <property type="evidence" value="ECO:0007669"/>
    <property type="project" value="Ensembl"/>
</dbReference>
<dbReference type="FunFam" id="2.60.120.40:FF:000001">
    <property type="entry name" value="Complement C1q B chain"/>
    <property type="match status" value="1"/>
</dbReference>
<dbReference type="Gene3D" id="2.60.120.40">
    <property type="match status" value="1"/>
</dbReference>
<dbReference type="InterPro" id="IPR001073">
    <property type="entry name" value="C1q_dom"/>
</dbReference>
<dbReference type="InterPro" id="IPR008160">
    <property type="entry name" value="Collagen"/>
</dbReference>
<dbReference type="InterPro" id="IPR050392">
    <property type="entry name" value="Collagen/C1q_domain"/>
</dbReference>
<dbReference type="InterPro" id="IPR008983">
    <property type="entry name" value="Tumour_necrosis_fac-like_dom"/>
</dbReference>
<dbReference type="PANTHER" id="PTHR15427:SF49">
    <property type="entry name" value="COLLAGEN ALPHA-1(VIII) CHAIN"/>
    <property type="match status" value="1"/>
</dbReference>
<dbReference type="PANTHER" id="PTHR15427">
    <property type="entry name" value="EMILIN ELASTIN MICROFIBRIL INTERFACE-LOCATED PROTEIN ELASTIN MICROFIBRIL INTERFACER"/>
    <property type="match status" value="1"/>
</dbReference>
<dbReference type="Pfam" id="PF00386">
    <property type="entry name" value="C1q"/>
    <property type="match status" value="1"/>
</dbReference>
<dbReference type="Pfam" id="PF01391">
    <property type="entry name" value="Collagen"/>
    <property type="match status" value="2"/>
</dbReference>
<dbReference type="PRINTS" id="PR00007">
    <property type="entry name" value="COMPLEMNTC1Q"/>
</dbReference>
<dbReference type="SMART" id="SM00110">
    <property type="entry name" value="C1Q"/>
    <property type="match status" value="1"/>
</dbReference>
<dbReference type="SUPFAM" id="SSF49842">
    <property type="entry name" value="TNF-like"/>
    <property type="match status" value="1"/>
</dbReference>
<dbReference type="PROSITE" id="PS50871">
    <property type="entry name" value="C1Q"/>
    <property type="match status" value="1"/>
</dbReference>
<sequence>MAVLPGPLQLLGVLLTISLSSIRLIQAGAYYGIKPLPPQIPPQMPPQIPQYQPLGQQVPHMPLAKDGLAMGKEMPHLQYGKEYPHLPQYMKEIQPAPRMGKEAVPKKGKEIPLASLRGEQGPRGEPGPRGPPGPPGLPGHGIPGIKGKPGPQGYPGVGKPGMPGMPGKPGAMGMPGAKGEIGQKGEIGPMGIPGPQGPPGPHGLPGIGKPGGPGLPGQPGPKGDRGPKGLPGPQGLRGPKGDKGFGMPGAPGVKGPPGMHGPPGPVGLPGVGKPGVTGFPGPQGPLGKPGAPGEPGPQGPIGVPGVQGPPGIPGIGKPGQDGIPGQPGFPGGKGEQGLPGLPGPPGLPGIGKPGFPGPKGDRGMGGVPGALGPRGEKGPIGAPGIGGPPGEPGLPGIPGPMGPPGAIGFPGPKGEGGIVGPQGPPGPKGEPGLQGFPGKPGFLGEVGPPGMRGLPGPIGPKGEAGQKGVPGLPGVPGLLGPKGEPGIPGDQGLQGPPGIPGIGGPSGPIGPPGIPGPKGEPGLPGPPGFPGIGKPGVAGLHGPPGKPGALGPQGQPGLPGPPGPPGPPGPPAVMPPTPPPQGEYLPDMGLGIDGVKPPHAYGAKKGKNGGPAYEMPAFTAELTAPFPPVGAPVKFNKLLYNGRQNYNPQTGIFTCEVPGVYYFAYHVHCKGGNVWVALFKNNEPVMYTYDEYKKGFLDQASGSAVLLLRPGDRVFLQMPSEQAAGLYAGQYVHSSFSGYLLYPM</sequence>